<gene>
    <name evidence="15" type="primary">CFAP65</name>
    <name evidence="15" type="synonym">CCDC108</name>
</gene>
<proteinExistence type="evidence at protein level"/>
<comment type="function">
    <text evidence="14">Plays a role in flagellar formation and sperm motility.</text>
</comment>
<comment type="subunit">
    <text evidence="11">Interacts with CFAP47.</text>
</comment>
<comment type="interaction">
    <interactant intactId="EBI-10255250">
        <id>Q6ZU64-3</id>
    </interactant>
    <interactant intactId="EBI-748961">
        <id>O95273</id>
        <label>CCNDBP1</label>
    </interactant>
    <organismsDiffer>false</organismsDiffer>
    <experiments>3</experiments>
</comment>
<comment type="subcellular location">
    <subcellularLocation>
        <location evidence="11">Cell projection</location>
        <location evidence="11">Cilium</location>
        <location evidence="11">Flagellum membrane</location>
        <topology evidence="13">Single-pass membrane protein</topology>
    </subcellularLocation>
    <subcellularLocation>
        <location evidence="8 11">Cytoplasmic vesicle</location>
        <location evidence="8 11">Secretory vesicle</location>
        <location evidence="8 11">Acrosome membrane</location>
        <topology evidence="1">Single-pass type I membrane protein</topology>
    </subcellularLocation>
    <subcellularLocation>
        <location evidence="8">Cytoplasm</location>
    </subcellularLocation>
    <text evidence="8 11">Expressed in flagella midpiece and acrosome of mature spermatozoa.</text>
</comment>
<comment type="alternative products">
    <event type="alternative splicing"/>
    <isoform>
        <id>Q6ZU64-1</id>
        <name>1</name>
        <sequence type="displayed"/>
    </isoform>
    <isoform>
        <id>Q6ZU64-3</id>
        <name>2</name>
        <sequence type="described" ref="VSP_045221 VSP_045222 VSP_045223"/>
    </isoform>
    <isoform>
        <id>Q6ZU64-4</id>
        <name>3</name>
        <sequence type="described" ref="VSP_045221 VSP_055632 VSP_055633"/>
    </isoform>
    <isoform>
        <id>Q6ZU64-5</id>
        <name>4</name>
        <sequence type="described" ref="VSP_055631 VSP_055632 VSP_055633"/>
    </isoform>
</comment>
<comment type="disease" evidence="6 8 9 10">
    <disease id="DI-05693">
        <name>Spermatogenic failure 40</name>
        <acronym>SPGF40</acronym>
        <description>An autosomal recessive infertility disorder characterized by severely reduced or absent sperm motility, due to multiple morphologic anomalies such as absent, short, bent, coiled and irregular-caliber tails. Patient spermatozoa may also show morphologic defects of the sperm head.</description>
        <dbReference type="MIM" id="618664"/>
    </disease>
    <text>The disease is caused by variants affecting the gene represented in this entry.</text>
</comment>
<comment type="similarity">
    <text evidence="13">Belongs to the CFAP65 family.</text>
</comment>
<comment type="sequence caution" evidence="13">
    <conflict type="erroneous initiation">
        <sequence resource="EMBL-CDS" id="BAC86362"/>
    </conflict>
    <text>Truncated N-terminus.</text>
</comment>
<comment type="sequence caution" evidence="13">
    <conflict type="miscellaneous discrepancy">
        <sequence resource="EMBL-CDS" id="BAC86878"/>
    </conflict>
    <text>Unlikely isoform. Aberrant splice sites.</text>
</comment>
<evidence type="ECO:0000255" key="1"/>
<evidence type="ECO:0000255" key="2">
    <source>
        <dbReference type="PROSITE-ProRule" id="PRU00132"/>
    </source>
</evidence>
<evidence type="ECO:0000256" key="3">
    <source>
        <dbReference type="SAM" id="MobiDB-lite"/>
    </source>
</evidence>
<evidence type="ECO:0000269" key="4">
    <source>
    </source>
</evidence>
<evidence type="ECO:0000269" key="5">
    <source>
    </source>
</evidence>
<evidence type="ECO:0000269" key="6">
    <source>
    </source>
</evidence>
<evidence type="ECO:0000269" key="7">
    <source>
    </source>
</evidence>
<evidence type="ECO:0000269" key="8">
    <source>
    </source>
</evidence>
<evidence type="ECO:0000269" key="9">
    <source>
    </source>
</evidence>
<evidence type="ECO:0000269" key="10">
    <source>
    </source>
</evidence>
<evidence type="ECO:0000269" key="11">
    <source>
    </source>
</evidence>
<evidence type="ECO:0000303" key="12">
    <source>
    </source>
</evidence>
<evidence type="ECO:0000305" key="13"/>
<evidence type="ECO:0000305" key="14">
    <source>
    </source>
</evidence>
<evidence type="ECO:0000312" key="15">
    <source>
        <dbReference type="HGNC" id="HGNC:25325"/>
    </source>
</evidence>
<name>CFA65_HUMAN</name>
<organism>
    <name type="scientific">Homo sapiens</name>
    <name type="common">Human</name>
    <dbReference type="NCBI Taxonomy" id="9606"/>
    <lineage>
        <taxon>Eukaryota</taxon>
        <taxon>Metazoa</taxon>
        <taxon>Chordata</taxon>
        <taxon>Craniata</taxon>
        <taxon>Vertebrata</taxon>
        <taxon>Euteleostomi</taxon>
        <taxon>Mammalia</taxon>
        <taxon>Eutheria</taxon>
        <taxon>Euarchontoglires</taxon>
        <taxon>Primates</taxon>
        <taxon>Haplorrhini</taxon>
        <taxon>Catarrhini</taxon>
        <taxon>Hominidae</taxon>
        <taxon>Homo</taxon>
    </lineage>
</organism>
<protein>
    <recommendedName>
        <fullName evidence="13">Cilia- and flagella-associated protein 65</fullName>
    </recommendedName>
    <alternativeName>
        <fullName evidence="15">Coiled-coil domain-containing protein 108</fullName>
    </alternativeName>
</protein>
<feature type="chain" id="PRO_0000288805" description="Cilia- and flagella-associated protein 65">
    <location>
        <begin position="1"/>
        <end position="1925"/>
    </location>
</feature>
<feature type="transmembrane region" description="Helical" evidence="1">
    <location>
        <begin position="188"/>
        <end position="208"/>
    </location>
</feature>
<feature type="domain" description="MSP" evidence="2">
    <location>
        <begin position="877"/>
        <end position="986"/>
    </location>
</feature>
<feature type="region of interest" description="Disordered" evidence="3">
    <location>
        <begin position="1645"/>
        <end position="1667"/>
    </location>
</feature>
<feature type="region of interest" description="Disordered" evidence="3">
    <location>
        <begin position="1736"/>
        <end position="1823"/>
    </location>
</feature>
<feature type="coiled-coil region" evidence="1">
    <location>
        <begin position="1525"/>
        <end position="1550"/>
    </location>
</feature>
<feature type="compositionally biased region" description="Basic and acidic residues" evidence="3">
    <location>
        <begin position="1649"/>
        <end position="1661"/>
    </location>
</feature>
<feature type="compositionally biased region" description="Basic and acidic residues" evidence="3">
    <location>
        <begin position="1739"/>
        <end position="1762"/>
    </location>
</feature>
<feature type="compositionally biased region" description="Acidic residues" evidence="3">
    <location>
        <begin position="1763"/>
        <end position="1804"/>
    </location>
</feature>
<feature type="splice variant" id="VSP_045221" description="In isoform 2 and isoform 3." evidence="12">
    <location>
        <begin position="1"/>
        <end position="65"/>
    </location>
</feature>
<feature type="splice variant" id="VSP_055631" description="In isoform 4." evidence="13">
    <original>MFTLTGCRLVEKTQKVENPSVSFASSFPLIPLLL</original>
    <variation>METAIWRRSYISLISSERPVHNW</variation>
    <location>
        <begin position="1"/>
        <end position="34"/>
    </location>
</feature>
<feature type="splice variant" id="VSP_045222" description="In isoform 2." evidence="12">
    <original>PPKTKFFFTVIPQPIFLSPGITLTLPIVFRPLEAKEYMDQLWFEKAEG</original>
    <variation>YQYKGSRTQCHSLEPRKQALFKTKQNKQKKPLTCHIKASECLKYVQYE</variation>
    <location>
        <begin position="182"/>
        <end position="229"/>
    </location>
</feature>
<feature type="splice variant" id="VSP_045223" description="In isoform 2." evidence="12">
    <location>
        <begin position="230"/>
        <end position="1925"/>
    </location>
</feature>
<feature type="splice variant" id="VSP_055632" description="In isoform 3 and isoform 4." evidence="13">
    <original>LQSYSNIEEDCTMCPSWCLTVRARGHSYFAGFEHHIPQYSLDVPKLFPAVSSGEPTY</original>
    <variation>CARNEREECGVSARSLSGLVGWQEVTEGSFRLHPLRARLSLGWTVTPMSLSPPKLLA</variation>
    <location>
        <begin position="739"/>
        <end position="795"/>
    </location>
</feature>
<feature type="splice variant" id="VSP_055633" description="In isoform 3 and isoform 4." evidence="13">
    <location>
        <begin position="796"/>
        <end position="1925"/>
    </location>
</feature>
<feature type="sequence variant" id="VAR_032500" description="In dbSNP:rs6736922." evidence="4 5">
    <original>M</original>
    <variation>L</variation>
    <location>
        <position position="66"/>
    </location>
</feature>
<feature type="sequence variant" id="VAR_083656" evidence="7">
    <original>D</original>
    <variation>E</variation>
    <location>
        <position position="639"/>
    </location>
</feature>
<feature type="sequence variant" id="VAR_050726" description="In dbSNP:rs13403802.">
    <original>V</original>
    <variation>I</variation>
    <location>
        <position position="672"/>
    </location>
</feature>
<feature type="sequence variant" id="VAR_083169" description="In SPGF40." evidence="8">
    <location>
        <begin position="762"/>
        <end position="1925"/>
    </location>
</feature>
<feature type="sequence variant" id="VAR_050727" description="In dbSNP:rs9653262.">
    <original>K</original>
    <variation>M</variation>
    <location>
        <position position="806"/>
    </location>
</feature>
<feature type="sequence variant" id="VAR_083170" description="In SPGF40." evidence="10">
    <location>
        <begin position="892"/>
        <end position="1925"/>
    </location>
</feature>
<feature type="sequence variant" id="VAR_083171" description="In SPGF40; uncertain significance." evidence="8">
    <original>N</original>
    <variation>K</variation>
    <location>
        <position position="1007"/>
    </location>
</feature>
<feature type="sequence variant" id="VAR_083172" description="In SPGF40; uncertain significance." evidence="9">
    <original>L</original>
    <variation>R</variation>
    <location>
        <position position="1016"/>
    </location>
</feature>
<feature type="sequence variant" id="VAR_083657" evidence="7">
    <original>I</original>
    <variation>F</variation>
    <location>
        <position position="1240"/>
    </location>
</feature>
<feature type="sequence variant" id="VAR_083173" description="In SPGF40." evidence="9">
    <location>
        <begin position="1619"/>
        <end position="1925"/>
    </location>
</feature>
<feature type="sequence variant" id="VAR_083174" description="In SPGF40." evidence="9">
    <location>
        <begin position="1757"/>
        <end position="1925"/>
    </location>
</feature>
<feature type="sequence variant" id="VAR_080903" description="In SPGF40." evidence="6 8 9">
    <location>
        <begin position="1781"/>
        <end position="1925"/>
    </location>
</feature>
<feature type="sequence variant" id="VAR_050728" description="In dbSNP:rs11893183.">
    <original>N</original>
    <variation>S</variation>
    <location>
        <position position="1858"/>
    </location>
</feature>
<feature type="sequence conflict" description="In Ref. 1; BAC86878." evidence="13" ref="1">
    <original>H</original>
    <variation>R</variation>
    <location>
        <position position="129"/>
    </location>
</feature>
<feature type="sequence conflict" description="In Ref. 1; BAC86878." evidence="13" ref="1">
    <original>T</original>
    <variation>A</variation>
    <location>
        <position position="320"/>
    </location>
</feature>
<feature type="sequence conflict" description="In Ref. 1; BAC86878." evidence="13" ref="1">
    <original>G</original>
    <variation>W</variation>
    <location>
        <position position="665"/>
    </location>
</feature>
<reference key="1">
    <citation type="journal article" date="2004" name="Nat. Genet.">
        <title>Complete sequencing and characterization of 21,243 full-length human cDNAs.</title>
        <authorList>
            <person name="Ota T."/>
            <person name="Suzuki Y."/>
            <person name="Nishikawa T."/>
            <person name="Otsuki T."/>
            <person name="Sugiyama T."/>
            <person name="Irie R."/>
            <person name="Wakamatsu A."/>
            <person name="Hayashi K."/>
            <person name="Sato H."/>
            <person name="Nagai K."/>
            <person name="Kimura K."/>
            <person name="Makita H."/>
            <person name="Sekine M."/>
            <person name="Obayashi M."/>
            <person name="Nishi T."/>
            <person name="Shibahara T."/>
            <person name="Tanaka T."/>
            <person name="Ishii S."/>
            <person name="Yamamoto J."/>
            <person name="Saito K."/>
            <person name="Kawai Y."/>
            <person name="Isono Y."/>
            <person name="Nakamura Y."/>
            <person name="Nagahari K."/>
            <person name="Murakami K."/>
            <person name="Yasuda T."/>
            <person name="Iwayanagi T."/>
            <person name="Wagatsuma M."/>
            <person name="Shiratori A."/>
            <person name="Sudo H."/>
            <person name="Hosoiri T."/>
            <person name="Kaku Y."/>
            <person name="Kodaira H."/>
            <person name="Kondo H."/>
            <person name="Sugawara M."/>
            <person name="Takahashi M."/>
            <person name="Kanda K."/>
            <person name="Yokoi T."/>
            <person name="Furuya T."/>
            <person name="Kikkawa E."/>
            <person name="Omura Y."/>
            <person name="Abe K."/>
            <person name="Kamihara K."/>
            <person name="Katsuta N."/>
            <person name="Sato K."/>
            <person name="Tanikawa M."/>
            <person name="Yamazaki M."/>
            <person name="Ninomiya K."/>
            <person name="Ishibashi T."/>
            <person name="Yamashita H."/>
            <person name="Murakawa K."/>
            <person name="Fujimori K."/>
            <person name="Tanai H."/>
            <person name="Kimata M."/>
            <person name="Watanabe M."/>
            <person name="Hiraoka S."/>
            <person name="Chiba Y."/>
            <person name="Ishida S."/>
            <person name="Ono Y."/>
            <person name="Takiguchi S."/>
            <person name="Watanabe S."/>
            <person name="Yosida M."/>
            <person name="Hotuta T."/>
            <person name="Kusano J."/>
            <person name="Kanehori K."/>
            <person name="Takahashi-Fujii A."/>
            <person name="Hara H."/>
            <person name="Tanase T.-O."/>
            <person name="Nomura Y."/>
            <person name="Togiya S."/>
            <person name="Komai F."/>
            <person name="Hara R."/>
            <person name="Takeuchi K."/>
            <person name="Arita M."/>
            <person name="Imose N."/>
            <person name="Musashino K."/>
            <person name="Yuuki H."/>
            <person name="Oshima A."/>
            <person name="Sasaki N."/>
            <person name="Aotsuka S."/>
            <person name="Yoshikawa Y."/>
            <person name="Matsunawa H."/>
            <person name="Ichihara T."/>
            <person name="Shiohata N."/>
            <person name="Sano S."/>
            <person name="Moriya S."/>
            <person name="Momiyama H."/>
            <person name="Satoh N."/>
            <person name="Takami S."/>
            <person name="Terashima Y."/>
            <person name="Suzuki O."/>
            <person name="Nakagawa S."/>
            <person name="Senoh A."/>
            <person name="Mizoguchi H."/>
            <person name="Goto Y."/>
            <person name="Shimizu F."/>
            <person name="Wakebe H."/>
            <person name="Hishigaki H."/>
            <person name="Watanabe T."/>
            <person name="Sugiyama A."/>
            <person name="Takemoto M."/>
            <person name="Kawakami B."/>
            <person name="Yamazaki M."/>
            <person name="Watanabe K."/>
            <person name="Kumagai A."/>
            <person name="Itakura S."/>
            <person name="Fukuzumi Y."/>
            <person name="Fujimori Y."/>
            <person name="Komiyama M."/>
            <person name="Tashiro H."/>
            <person name="Tanigami A."/>
            <person name="Fujiwara T."/>
            <person name="Ono T."/>
            <person name="Yamada K."/>
            <person name="Fujii Y."/>
            <person name="Ozaki K."/>
            <person name="Hirao M."/>
            <person name="Ohmori Y."/>
            <person name="Kawabata A."/>
            <person name="Hikiji T."/>
            <person name="Kobatake N."/>
            <person name="Inagaki H."/>
            <person name="Ikema Y."/>
            <person name="Okamoto S."/>
            <person name="Okitani R."/>
            <person name="Kawakami T."/>
            <person name="Noguchi S."/>
            <person name="Itoh T."/>
            <person name="Shigeta K."/>
            <person name="Senba T."/>
            <person name="Matsumura K."/>
            <person name="Nakajima Y."/>
            <person name="Mizuno T."/>
            <person name="Morinaga M."/>
            <person name="Sasaki M."/>
            <person name="Togashi T."/>
            <person name="Oyama M."/>
            <person name="Hata H."/>
            <person name="Watanabe M."/>
            <person name="Komatsu T."/>
            <person name="Mizushima-Sugano J."/>
            <person name="Satoh T."/>
            <person name="Shirai Y."/>
            <person name="Takahashi Y."/>
            <person name="Nakagawa K."/>
            <person name="Okumura K."/>
            <person name="Nagase T."/>
            <person name="Nomura N."/>
            <person name="Kikuchi H."/>
            <person name="Masuho Y."/>
            <person name="Yamashita R."/>
            <person name="Nakai K."/>
            <person name="Yada T."/>
            <person name="Nakamura Y."/>
            <person name="Ohara O."/>
            <person name="Isogai T."/>
            <person name="Sugano S."/>
        </authorList>
    </citation>
    <scope>NUCLEOTIDE SEQUENCE [LARGE SCALE MRNA] (ISOFORM 1)</scope>
    <scope>VARIANT LEU-66</scope>
    <source>
        <tissue>Testis</tissue>
    </source>
</reference>
<reference key="2">
    <citation type="journal article" date="2005" name="Nature">
        <title>Generation and annotation of the DNA sequences of human chromosomes 2 and 4.</title>
        <authorList>
            <person name="Hillier L.W."/>
            <person name="Graves T.A."/>
            <person name="Fulton R.S."/>
            <person name="Fulton L.A."/>
            <person name="Pepin K.H."/>
            <person name="Minx P."/>
            <person name="Wagner-McPherson C."/>
            <person name="Layman D."/>
            <person name="Wylie K."/>
            <person name="Sekhon M."/>
            <person name="Becker M.C."/>
            <person name="Fewell G.A."/>
            <person name="Delehaunty K.D."/>
            <person name="Miner T.L."/>
            <person name="Nash W.E."/>
            <person name="Kremitzki C."/>
            <person name="Oddy L."/>
            <person name="Du H."/>
            <person name="Sun H."/>
            <person name="Bradshaw-Cordum H."/>
            <person name="Ali J."/>
            <person name="Carter J."/>
            <person name="Cordes M."/>
            <person name="Harris A."/>
            <person name="Isak A."/>
            <person name="van Brunt A."/>
            <person name="Nguyen C."/>
            <person name="Du F."/>
            <person name="Courtney L."/>
            <person name="Kalicki J."/>
            <person name="Ozersky P."/>
            <person name="Abbott S."/>
            <person name="Armstrong J."/>
            <person name="Belter E.A."/>
            <person name="Caruso L."/>
            <person name="Cedroni M."/>
            <person name="Cotton M."/>
            <person name="Davidson T."/>
            <person name="Desai A."/>
            <person name="Elliott G."/>
            <person name="Erb T."/>
            <person name="Fronick C."/>
            <person name="Gaige T."/>
            <person name="Haakenson W."/>
            <person name="Haglund K."/>
            <person name="Holmes A."/>
            <person name="Harkins R."/>
            <person name="Kim K."/>
            <person name="Kruchowski S.S."/>
            <person name="Strong C.M."/>
            <person name="Grewal N."/>
            <person name="Goyea E."/>
            <person name="Hou S."/>
            <person name="Levy A."/>
            <person name="Martinka S."/>
            <person name="Mead K."/>
            <person name="McLellan M.D."/>
            <person name="Meyer R."/>
            <person name="Randall-Maher J."/>
            <person name="Tomlinson C."/>
            <person name="Dauphin-Kohlberg S."/>
            <person name="Kozlowicz-Reilly A."/>
            <person name="Shah N."/>
            <person name="Swearengen-Shahid S."/>
            <person name="Snider J."/>
            <person name="Strong J.T."/>
            <person name="Thompson J."/>
            <person name="Yoakum M."/>
            <person name="Leonard S."/>
            <person name="Pearman C."/>
            <person name="Trani L."/>
            <person name="Radionenko M."/>
            <person name="Waligorski J.E."/>
            <person name="Wang C."/>
            <person name="Rock S.M."/>
            <person name="Tin-Wollam A.-M."/>
            <person name="Maupin R."/>
            <person name="Latreille P."/>
            <person name="Wendl M.C."/>
            <person name="Yang S.-P."/>
            <person name="Pohl C."/>
            <person name="Wallis J.W."/>
            <person name="Spieth J."/>
            <person name="Bieri T.A."/>
            <person name="Berkowicz N."/>
            <person name="Nelson J.O."/>
            <person name="Osborne J."/>
            <person name="Ding L."/>
            <person name="Meyer R."/>
            <person name="Sabo A."/>
            <person name="Shotland Y."/>
            <person name="Sinha P."/>
            <person name="Wohldmann P.E."/>
            <person name="Cook L.L."/>
            <person name="Hickenbotham M.T."/>
            <person name="Eldred J."/>
            <person name="Williams D."/>
            <person name="Jones T.A."/>
            <person name="She X."/>
            <person name="Ciccarelli F.D."/>
            <person name="Izaurralde E."/>
            <person name="Taylor J."/>
            <person name="Schmutz J."/>
            <person name="Myers R.M."/>
            <person name="Cox D.R."/>
            <person name="Huang X."/>
            <person name="McPherson J.D."/>
            <person name="Mardis E.R."/>
            <person name="Clifton S.W."/>
            <person name="Warren W.C."/>
            <person name="Chinwalla A.T."/>
            <person name="Eddy S.R."/>
            <person name="Marra M.A."/>
            <person name="Ovcharenko I."/>
            <person name="Furey T.S."/>
            <person name="Miller W."/>
            <person name="Eichler E.E."/>
            <person name="Bork P."/>
            <person name="Suyama M."/>
            <person name="Torrents D."/>
            <person name="Waterston R.H."/>
            <person name="Wilson R.K."/>
        </authorList>
    </citation>
    <scope>NUCLEOTIDE SEQUENCE [LARGE SCALE GENOMIC DNA]</scope>
</reference>
<reference key="3">
    <citation type="journal article" date="2004" name="Genome Res.">
        <title>The status, quality, and expansion of the NIH full-length cDNA project: the Mammalian Gene Collection (MGC).</title>
        <authorList>
            <consortium name="The MGC Project Team"/>
        </authorList>
    </citation>
    <scope>NUCLEOTIDE SEQUENCE [LARGE SCALE MRNA] (ISOFORM 2)</scope>
    <scope>NUCLEOTIDE SEQUENCE [LARGE SCALE MRNA] OF 704-1925 (ISOFORM 1)</scope>
    <scope>VARIANT LEU-66</scope>
    <source>
        <tissue>Brain</tissue>
    </source>
</reference>
<reference key="4">
    <citation type="journal article" date="2007" name="BMC Genomics">
        <title>The full-ORF clone resource of the German cDNA consortium.</title>
        <authorList>
            <person name="Bechtel S."/>
            <person name="Rosenfelder H."/>
            <person name="Duda A."/>
            <person name="Schmidt C.P."/>
            <person name="Ernst U."/>
            <person name="Wellenreuther R."/>
            <person name="Mehrle A."/>
            <person name="Schuster C."/>
            <person name="Bahr A."/>
            <person name="Bloecker H."/>
            <person name="Heubner D."/>
            <person name="Hoerlein A."/>
            <person name="Michel G."/>
            <person name="Wedler H."/>
            <person name="Koehrer K."/>
            <person name="Ottenwaelder B."/>
            <person name="Poustka A."/>
            <person name="Wiemann S."/>
            <person name="Schupp I."/>
        </authorList>
    </citation>
    <scope>NUCLEOTIDE SEQUENCE [LARGE SCALE MRNA] OF 821-1215 (ISOFORM 1)</scope>
    <source>
        <tissue>Testis</tissue>
    </source>
</reference>
<reference key="5">
    <citation type="journal article" date="2021" name="Am. J. Hum. Genet.">
        <title>Deleterious variants in X-linked CFAP47 induce asthenoteratozoospermia and primary male infertility.</title>
        <authorList>
            <person name="Liu C."/>
            <person name="Tu C."/>
            <person name="Wang L."/>
            <person name="Wu H."/>
            <person name="Houston B.J."/>
            <person name="Mastrorosa F.K."/>
            <person name="Zhang W."/>
            <person name="Shen Y."/>
            <person name="Wang J."/>
            <person name="Tian S."/>
            <person name="Meng L."/>
            <person name="Cong J."/>
            <person name="Yang S."/>
            <person name="Jiang Y."/>
            <person name="Tang S."/>
            <person name="Zeng Y."/>
            <person name="Lv M."/>
            <person name="Lin G."/>
            <person name="Li J."/>
            <person name="Saiyin H."/>
            <person name="He X."/>
            <person name="Jin L."/>
            <person name="Toure A."/>
            <person name="Ray P.F."/>
            <person name="Veltman J.A."/>
            <person name="Shi Q."/>
            <person name="O'Bryan M.K."/>
            <person name="Cao Y."/>
            <person name="Tan Y.Q."/>
            <person name="Zhang F."/>
        </authorList>
    </citation>
    <scope>FUNCTION</scope>
    <scope>SUBCELLULAR LOCATION</scope>
    <scope>INTERACTION WITH CFAP47</scope>
</reference>
<reference key="6">
    <citation type="journal article" date="2017" name="Am. J. Hum. Genet.">
        <title>Biallelic mutations in CFAP43 and CFAP44 cause male infertility with multiple morphological abnormalities of the sperm flagella.</title>
        <authorList>
            <person name="Tang S."/>
            <person name="Wang X."/>
            <person name="Li W."/>
            <person name="Yang X."/>
            <person name="Li Z."/>
            <person name="Liu W."/>
            <person name="Li C."/>
            <person name="Zhu Z."/>
            <person name="Wang L."/>
            <person name="Wang J."/>
            <person name="Zhang L."/>
            <person name="Sun X."/>
            <person name="Zhi E."/>
            <person name="Wang H."/>
            <person name="Li H."/>
            <person name="Jin L."/>
            <person name="Luo Y."/>
            <person name="Wang J."/>
            <person name="Yang S."/>
            <person name="Zhang F."/>
        </authorList>
    </citation>
    <scope>VARIANT SPGF40 1781-GLU--PRO-1925 DEL</scope>
</reference>
<reference key="7">
    <citation type="journal article" date="2019" name="Clin. Genet.">
        <title>A novel homozygous CFAP65 mutation in humans causes male infertility with multiple morphological abnormalities of the sperm flagella.</title>
        <authorList>
            <person name="Zhang X."/>
            <person name="Shen Y."/>
            <person name="Wang X."/>
            <person name="Yuan G."/>
            <person name="Zhang C."/>
            <person name="Yang Y."/>
        </authorList>
    </citation>
    <scope>VARIANT SPGF40 892-TRP--PRO-1925 DEL</scope>
    <scope>INVOLVEMENT IN SPGF40</scope>
</reference>
<reference key="8">
    <citation type="journal article" date="2019" name="J. Med. Genet.">
        <title>Biallelic mutations in CFAP65 lead to severe asthenoteratospermia due to acrosome hypoplasia and flagellum malformations.</title>
        <authorList>
            <person name="Wang W."/>
            <person name="Tu C."/>
            <person name="Nie H."/>
            <person name="Meng L."/>
            <person name="Li Y."/>
            <person name="Yuan S."/>
            <person name="Zhang Q."/>
            <person name="Du J."/>
            <person name="Wang J."/>
            <person name="Gong F."/>
            <person name="Fan L."/>
            <person name="Lu G.X."/>
            <person name="Lin G."/>
            <person name="Tan Y.Q."/>
        </authorList>
    </citation>
    <scope>INVOLVEMENT IN SPGF40</scope>
    <scope>SUBCELLULAR LOCATION</scope>
    <scope>VARIANTS SPGF40 762-ARG--PRO-1925 DEL; LYS-1007 AND 1781-GLU--PRO-1925 DEL</scope>
</reference>
<reference key="9">
    <citation type="journal article" date="2020" name="J. Med. Genet.">
        <title>Biallelic mutations in CFAP65 cause male infertility with multiple morphological abnormalities of the sperm flagella in humans and mice.</title>
        <authorList>
            <person name="Li W."/>
            <person name="Wu H."/>
            <person name="Li F."/>
            <person name="Tian S."/>
            <person name="Kherraf Z.E."/>
            <person name="Zhang J."/>
            <person name="Ni X."/>
            <person name="Lv M."/>
            <person name="Liu C."/>
            <person name="Tan Q."/>
            <person name="Shen Y."/>
            <person name="Amiri-Yekta A."/>
            <person name="Cazin C."/>
            <person name="Zhang J."/>
            <person name="Liu W."/>
            <person name="Zheng Y."/>
            <person name="Cheng H."/>
            <person name="Wu Y."/>
            <person name="Wang J."/>
            <person name="Gao Y."/>
            <person name="Chen Y."/>
            <person name="Zha X."/>
            <person name="Jin L."/>
            <person name="Liu M."/>
            <person name="He X."/>
            <person name="Ray P.F."/>
            <person name="Cao Y."/>
            <person name="Zhang F."/>
        </authorList>
    </citation>
    <scope>INVOLVEMENT IN SPGF40</scope>
    <scope>VARIANTS SPGF40 ARG-1016; 1619-ARG--PRO-1925 DEL; 1757-LEU--PRO-1925 DEL AND 1781-GLU--PRO-1925 DEL</scope>
</reference>
<reference key="10">
    <citation type="journal article" date="2017" name="Hum. Mutat.">
        <title>CSNK2B splice site mutations in patients cause intellectual disability with or without myoclonic epilepsy.</title>
        <authorList>
            <person name="Poirier K."/>
            <person name="Hubert L."/>
            <person name="Viot G."/>
            <person name="Rio M."/>
            <person name="Billuart P."/>
            <person name="Besmond C."/>
            <person name="Bienvenu T."/>
        </authorList>
    </citation>
    <scope>VARIANTS GLU-639 AND PHE-1240</scope>
</reference>
<keyword id="KW-0025">Alternative splicing</keyword>
<keyword id="KW-1003">Cell membrane</keyword>
<keyword id="KW-0966">Cell projection</keyword>
<keyword id="KW-0969">Cilium</keyword>
<keyword id="KW-0970">Cilium biogenesis/degradation</keyword>
<keyword id="KW-0175">Coiled coil</keyword>
<keyword id="KW-0963">Cytoplasm</keyword>
<keyword id="KW-0968">Cytoplasmic vesicle</keyword>
<keyword id="KW-0225">Disease variant</keyword>
<keyword id="KW-0282">Flagellum</keyword>
<keyword id="KW-0472">Membrane</keyword>
<keyword id="KW-1267">Proteomics identification</keyword>
<keyword id="KW-1185">Reference proteome</keyword>
<keyword id="KW-0812">Transmembrane</keyword>
<keyword id="KW-1133">Transmembrane helix</keyword>
<dbReference type="EMBL" id="AK125957">
    <property type="protein sequence ID" value="BAC86362.1"/>
    <property type="status" value="ALT_INIT"/>
    <property type="molecule type" value="mRNA"/>
</dbReference>
<dbReference type="EMBL" id="AK127189">
    <property type="protein sequence ID" value="BAC86878.1"/>
    <property type="status" value="ALT_SEQ"/>
    <property type="molecule type" value="mRNA"/>
</dbReference>
<dbReference type="EMBL" id="AC097468">
    <property type="status" value="NOT_ANNOTATED_CDS"/>
    <property type="molecule type" value="Genomic_DNA"/>
</dbReference>
<dbReference type="EMBL" id="BC031585">
    <property type="protein sequence ID" value="AAH31585.1"/>
    <property type="molecule type" value="mRNA"/>
</dbReference>
<dbReference type="EMBL" id="BC130281">
    <property type="protein sequence ID" value="AAI30282.1"/>
    <property type="molecule type" value="mRNA"/>
</dbReference>
<dbReference type="EMBL" id="AL833882">
    <property type="protein sequence ID" value="CAD38738.1"/>
    <property type="molecule type" value="mRNA"/>
</dbReference>
<dbReference type="CCDS" id="CCDS2430.2">
    <molecule id="Q6ZU64-1"/>
</dbReference>
<dbReference type="CCDS" id="CCDS2431.2">
    <molecule id="Q6ZU64-3"/>
</dbReference>
<dbReference type="CCDS" id="CCDS63125.1">
    <molecule id="Q6ZU64-4"/>
</dbReference>
<dbReference type="CCDS" id="CCDS63126.1">
    <molecule id="Q6ZU64-5"/>
</dbReference>
<dbReference type="RefSeq" id="NP_001265224.1">
    <molecule id="Q6ZU64-5"/>
    <property type="nucleotide sequence ID" value="NM_001278295.1"/>
</dbReference>
<dbReference type="RefSeq" id="NP_001265225.1">
    <molecule id="Q6ZU64-4"/>
    <property type="nucleotide sequence ID" value="NM_001278296.2"/>
</dbReference>
<dbReference type="RefSeq" id="NP_689602.2">
    <molecule id="Q6ZU64-3"/>
    <property type="nucleotide sequence ID" value="NM_152389.4"/>
</dbReference>
<dbReference type="RefSeq" id="NP_919278.2">
    <molecule id="Q6ZU64-1"/>
    <property type="nucleotide sequence ID" value="NM_194302.4"/>
</dbReference>
<dbReference type="SMR" id="Q6ZU64"/>
<dbReference type="BioGRID" id="129075">
    <property type="interactions" value="4"/>
</dbReference>
<dbReference type="FunCoup" id="Q6ZU64">
    <property type="interactions" value="60"/>
</dbReference>
<dbReference type="IntAct" id="Q6ZU64">
    <property type="interactions" value="3"/>
</dbReference>
<dbReference type="STRING" id="9606.ENSP00000340776"/>
<dbReference type="GlyGen" id="Q6ZU64">
    <property type="glycosylation" value="2 sites, 1 O-linked glycan (1 site)"/>
</dbReference>
<dbReference type="iPTMnet" id="Q6ZU64"/>
<dbReference type="PhosphoSitePlus" id="Q6ZU64"/>
<dbReference type="BioMuta" id="CFAP65"/>
<dbReference type="DMDM" id="148841209"/>
<dbReference type="jPOST" id="Q6ZU64"/>
<dbReference type="MassIVE" id="Q6ZU64"/>
<dbReference type="PaxDb" id="9606-ENSP00000340776"/>
<dbReference type="PeptideAtlas" id="Q6ZU64"/>
<dbReference type="ProteomicsDB" id="19496"/>
<dbReference type="ProteomicsDB" id="20228"/>
<dbReference type="ProteomicsDB" id="20258"/>
<dbReference type="ProteomicsDB" id="68312">
    <molecule id="Q6ZU64-1"/>
</dbReference>
<dbReference type="Antibodypedia" id="34298">
    <property type="antibodies" value="44 antibodies from 10 providers"/>
</dbReference>
<dbReference type="DNASU" id="255101"/>
<dbReference type="Ensembl" id="ENST00000295729.6">
    <molecule id="Q6ZU64-3"/>
    <property type="protein sequence ID" value="ENSP00000295729.2"/>
    <property type="gene ID" value="ENSG00000181378.14"/>
</dbReference>
<dbReference type="Ensembl" id="ENST00000341552.10">
    <molecule id="Q6ZU64-1"/>
    <property type="protein sequence ID" value="ENSP00000340776.5"/>
    <property type="gene ID" value="ENSG00000181378.14"/>
</dbReference>
<dbReference type="Ensembl" id="ENST00000409865.7">
    <molecule id="Q6ZU64-5"/>
    <property type="protein sequence ID" value="ENSP00000386945.3"/>
    <property type="gene ID" value="ENSG00000181378.14"/>
</dbReference>
<dbReference type="Ensembl" id="ENST00000410037.5">
    <molecule id="Q6ZU64-4"/>
    <property type="protein sequence ID" value="ENSP00000386258.1"/>
    <property type="gene ID" value="ENSG00000181378.14"/>
</dbReference>
<dbReference type="Ensembl" id="ENST00000453220.5">
    <molecule id="Q6ZU64-1"/>
    <property type="protein sequence ID" value="ENSP00000409117.1"/>
    <property type="gene ID" value="ENSG00000181378.14"/>
</dbReference>
<dbReference type="GeneID" id="255101"/>
<dbReference type="KEGG" id="hsa:255101"/>
<dbReference type="MANE-Select" id="ENST00000341552.10">
    <property type="protein sequence ID" value="ENSP00000340776.5"/>
    <property type="RefSeq nucleotide sequence ID" value="NM_194302.4"/>
    <property type="RefSeq protein sequence ID" value="NP_919278.2"/>
</dbReference>
<dbReference type="UCSC" id="uc002vjl.3">
    <molecule id="Q6ZU64-1"/>
    <property type="organism name" value="human"/>
</dbReference>
<dbReference type="AGR" id="HGNC:25325"/>
<dbReference type="CTD" id="255101"/>
<dbReference type="DisGeNET" id="255101"/>
<dbReference type="GeneCards" id="CFAP65"/>
<dbReference type="HGNC" id="HGNC:25325">
    <property type="gene designation" value="CFAP65"/>
</dbReference>
<dbReference type="HPA" id="ENSG00000181378">
    <property type="expression patterns" value="Tissue enhanced (choroid plexus, fallopian tube, retina, testis)"/>
</dbReference>
<dbReference type="MalaCards" id="CFAP65"/>
<dbReference type="MIM" id="614270">
    <property type="type" value="gene"/>
</dbReference>
<dbReference type="MIM" id="618664">
    <property type="type" value="phenotype"/>
</dbReference>
<dbReference type="neXtProt" id="NX_Q6ZU64"/>
<dbReference type="OpenTargets" id="ENSG00000181378"/>
<dbReference type="Orphanet" id="276234">
    <property type="disease" value="Non-syndromic male infertility due to sperm motility disorder"/>
</dbReference>
<dbReference type="PharmGKB" id="PA145008681"/>
<dbReference type="VEuPathDB" id="HostDB:ENSG00000181378"/>
<dbReference type="eggNOG" id="ENOG502QSJW">
    <property type="taxonomic scope" value="Eukaryota"/>
</dbReference>
<dbReference type="GeneTree" id="ENSGT00430000031142"/>
<dbReference type="HOGENOM" id="CLU_000944_1_0_1"/>
<dbReference type="InParanoid" id="Q6ZU64"/>
<dbReference type="OMA" id="QQLKVMV"/>
<dbReference type="OrthoDB" id="415597at2759"/>
<dbReference type="PAN-GO" id="Q6ZU64">
    <property type="GO annotations" value="3 GO annotations based on evolutionary models"/>
</dbReference>
<dbReference type="PhylomeDB" id="Q6ZU64"/>
<dbReference type="TreeFam" id="TF329056"/>
<dbReference type="PathwayCommons" id="Q6ZU64"/>
<dbReference type="SignaLink" id="Q6ZU64"/>
<dbReference type="BioGRID-ORCS" id="255101">
    <property type="hits" value="8 hits in 1143 CRISPR screens"/>
</dbReference>
<dbReference type="ChiTaRS" id="CFAP65">
    <property type="organism name" value="human"/>
</dbReference>
<dbReference type="GenomeRNAi" id="255101"/>
<dbReference type="Pharos" id="Q6ZU64">
    <property type="development level" value="Tdark"/>
</dbReference>
<dbReference type="PRO" id="PR:Q6ZU64"/>
<dbReference type="Proteomes" id="UP000005640">
    <property type="component" value="Chromosome 2"/>
</dbReference>
<dbReference type="RNAct" id="Q6ZU64">
    <property type="molecule type" value="protein"/>
</dbReference>
<dbReference type="Bgee" id="ENSG00000181378">
    <property type="expression patterns" value="Expressed in right uterine tube and 86 other cell types or tissues"/>
</dbReference>
<dbReference type="ExpressionAtlas" id="Q6ZU64">
    <property type="expression patterns" value="baseline and differential"/>
</dbReference>
<dbReference type="GO" id="GO:0002080">
    <property type="term" value="C:acrosomal membrane"/>
    <property type="evidence" value="ECO:0007669"/>
    <property type="project" value="UniProtKB-SubCell"/>
</dbReference>
<dbReference type="GO" id="GO:0001669">
    <property type="term" value="C:acrosomal vesicle"/>
    <property type="evidence" value="ECO:0000314"/>
    <property type="project" value="UniProtKB"/>
</dbReference>
<dbReference type="GO" id="GO:0005737">
    <property type="term" value="C:cytoplasm"/>
    <property type="evidence" value="ECO:0000314"/>
    <property type="project" value="UniProtKB"/>
</dbReference>
<dbReference type="GO" id="GO:0005886">
    <property type="term" value="C:plasma membrane"/>
    <property type="evidence" value="ECO:0007669"/>
    <property type="project" value="UniProtKB-KW"/>
</dbReference>
<dbReference type="GO" id="GO:0036126">
    <property type="term" value="C:sperm flagellum"/>
    <property type="evidence" value="ECO:0000314"/>
    <property type="project" value="UniProtKB"/>
</dbReference>
<dbReference type="GO" id="GO:0097225">
    <property type="term" value="C:sperm midpiece"/>
    <property type="evidence" value="ECO:0000314"/>
    <property type="project" value="UniProtKB"/>
</dbReference>
<dbReference type="GO" id="GO:0003723">
    <property type="term" value="F:RNA binding"/>
    <property type="evidence" value="ECO:0007005"/>
    <property type="project" value="UniProtKB"/>
</dbReference>
<dbReference type="GO" id="GO:0030317">
    <property type="term" value="P:flagellated sperm motility"/>
    <property type="evidence" value="ECO:0000250"/>
    <property type="project" value="UniProtKB"/>
</dbReference>
<dbReference type="GO" id="GO:0007288">
    <property type="term" value="P:sperm axoneme assembly"/>
    <property type="evidence" value="ECO:0000250"/>
    <property type="project" value="UniProtKB"/>
</dbReference>
<dbReference type="Gene3D" id="2.60.40.10">
    <property type="entry name" value="Immunoglobulins"/>
    <property type="match status" value="7"/>
</dbReference>
<dbReference type="InterPro" id="IPR052614">
    <property type="entry name" value="CFAP65"/>
</dbReference>
<dbReference type="InterPro" id="IPR013783">
    <property type="entry name" value="Ig-like_fold"/>
</dbReference>
<dbReference type="InterPro" id="IPR056305">
    <property type="entry name" value="Ig_CFAP65_10th"/>
</dbReference>
<dbReference type="InterPro" id="IPR000535">
    <property type="entry name" value="MSP_dom"/>
</dbReference>
<dbReference type="PANTHER" id="PTHR46127">
    <property type="entry name" value="CILIA- AND FLAGELLA-ASSOCIATED PROTEIN 65"/>
    <property type="match status" value="1"/>
</dbReference>
<dbReference type="PANTHER" id="PTHR46127:SF1">
    <property type="entry name" value="CILIA- AND FLAGELLA-ASSOCIATED PROTEIN 65"/>
    <property type="match status" value="1"/>
</dbReference>
<dbReference type="Pfam" id="PF24291">
    <property type="entry name" value="Ig_CFAP65"/>
    <property type="match status" value="1"/>
</dbReference>
<dbReference type="Pfam" id="PF24507">
    <property type="entry name" value="Ig_CFAP65_4th"/>
    <property type="match status" value="2"/>
</dbReference>
<dbReference type="Pfam" id="PF25249">
    <property type="entry name" value="Ig_CFAP65_7th"/>
    <property type="match status" value="1"/>
</dbReference>
<dbReference type="Pfam" id="PF25248">
    <property type="entry name" value="Ig_CFAP65_8th"/>
    <property type="match status" value="1"/>
</dbReference>
<dbReference type="Pfam" id="PF24816">
    <property type="entry name" value="Ig_CFAP65__9th"/>
    <property type="match status" value="1"/>
</dbReference>
<dbReference type="PROSITE" id="PS50202">
    <property type="entry name" value="MSP"/>
    <property type="match status" value="1"/>
</dbReference>
<accession>Q6ZU64</accession>
<accession>A2BDD8</accession>
<accession>E9PCR1</accession>
<accession>E9PG25</accession>
<accession>E9PG72</accession>
<accession>Q6ZSR8</accession>
<accession>Q8N0T4</accession>
<accession>Q8NDJ3</accession>
<sequence>MFTLTGCRLVEKTQKVENPSVSFASSFPLIPLLLRGKSVQKKQAESKSQIKLHTQSAPFGLCPKDMMLTQAPSSVVRSRNSRNHTVNSGGSCLSASTVAIPAINDSSAAMSACSTISAQPASSMDTQMHSPKKQERVNKRVIWGIEVAEELHWKGWELGKETTRNLVLKNRSLKLQKMKYRPPKTKFFFTVIPQPIFLSPGITLTLPIVFRPLEAKEYMDQLWFEKAEGMFCVGLRATLPCHRLICRPPSLQLPMCAVGDTTEAFFCLDNVGDLPTFFTWEFSSPFQMLPATGLLEPGQASQIKVTFQPLTAVIYEVQATCWYGAGSRQRSSIQLQAVAKCAQLLVSIKHKCPEDQDAEGFQKLLYFGSVAVGCTSERQIRLHNPSAVNAPFRIEISPDELAEDQAFSCPTAHGIVLPGEKKCVSVFFHPKTLDTRTVDYCSIMPSGCASKTLLKVVGFCRGPAVSLQHYCVNFSWVNLGERSEQPLWIENQSDCTAHFQFAIDCLESVFTIRPAFGTLVGKARMTLHCAFQPTHPIICFRRVACLIHHQDPLFLDLMGTCHSDSTKPAILKPQHLTWYRTHLARGLTLYPPDILDAMLKEKKLAQDQNGALMIPIQDLEDMPAPQYPYIPPMTEFFFDGTSDITIFPPPISVEPVEVDFGACPGPEAPNPVPLCLMNHTKGKIMVVWTRRSDCPFWVTPESCDVPPLKSMAMRLHFQPPHPNCLYTVELEAFAIYKVLQSYSNIEEDCTMCPSWCLTVRARGHSYFAGFEHHIPQYSLDVPKLFPAVSSGEPTYRSLLLVNKDCKLLTFSLAPQRGSDVILRPTSGLVAPGAHQIILICTYPEGSSWKQHTFYLQCNASPQYLKEVSMYSREEPLQLKLDTHKSLYFKPTWVGCSSTSPFTFRNPSRLPLQFEWRVSEQHRKLLAVQPSRGLIQPNERLTLTWTFSPLEETKYLFQVGMWVWEAGLSPNANPAATTHYMLRLVGVGLTSSLSAKEKELAFGNVLVNSKQSRFLVLLNDGNCTLYYRLYLEQGSPEAVDNHPLALQLDRTEGSMPPRSQDTICLTACPKQRSQYSWTITYSLLSHRDNKAGEKQELCCVSLVAVYPLLSILDVSSMGSAEGITRKHLWRLFSLDLLNSYLERDPTPCELTYKVPTRHSMSQIPPVLTPLRLDFNFGAAPFKAPPSVVFLALKNSGVVSLDWAFLLPSDQRIDVELWAEQAELNSTELHQMRVQDNCLFSISPKAGSLSPGQEQMVELKYSHLFIGTDHLPVLFKVSHGREILLNFIGVTVKPEQKYVHFTSTTHQFIPIPIGDTLPPRQIYELYNGGSVPVTYEVQTDVLSQVQEKNFDHPIFCCLNPKGEIQPGSTARVLWIFSPIEAKTYTVDVPIHILGWNSALIHFQGVGYNPHMMGDTAPFHNISSWDNSSIHSRLVVPGQNVFLSQSHISLGNIPVQSKCSRLLFLNNISKNEEIAFSWQPSPLDFGEVSVSPMIGVVAPEETVPFVVTLRASVHASFYSADLVCKLYSQQLMRQYHKELQEWKDEKVRQEVEFTITDMKVKKRTCCTACEPARKYKTLPPIKNQQSVSRPASWKLQTPKEEVSWPCPQPPSPGMLCLGLTARAHATDYFLANFFSEFPCHFLHRELPKRKAPREESETSEEKSPNKWGPVSKQKKQLLVDILTTIIRGLLEDKNFHEAVDQSLVEQVPYFRQFWNEQSTKFMDQKNSLYLMPILPVPSSSWEDGKGKQPKEDRPEHYPGLGKKEEGEEEKGEEEEEELEEEEEEEEETEEEELGKEEIEEKEEERDEKEEKVSWAGIGPTPQPESQESMQWQWQQQLNVMVKEEQEQDEKEAIRRLPAFANLQEALLENMIQNILVEASRGEVVLTSRPRVIALPPFCVPRSLTPDTLLPTQQAEVLHPVVPLPTDLP</sequence>